<reference key="1">
    <citation type="journal article" date="2004" name="Proc. Natl. Acad. Sci. U.S.A.">
        <title>The louse-borne human pathogen Bartonella quintana is a genomic derivative of the zoonotic agent Bartonella henselae.</title>
        <authorList>
            <person name="Alsmark U.C.M."/>
            <person name="Frank A.C."/>
            <person name="Karlberg E.O."/>
            <person name="Legault B.-A."/>
            <person name="Ardell D.H."/>
            <person name="Canbaeck B."/>
            <person name="Eriksson A.-S."/>
            <person name="Naeslund A.K."/>
            <person name="Handley S.A."/>
            <person name="Huvet M."/>
            <person name="La Scola B."/>
            <person name="Holmberg M."/>
            <person name="Andersson S.G.E."/>
        </authorList>
    </citation>
    <scope>NUCLEOTIDE SEQUENCE [LARGE SCALE GENOMIC DNA]</scope>
    <source>
        <strain>Toulouse</strain>
    </source>
</reference>
<comment type="function">
    <text evidence="1">Catalyzes the attachment of threonine to tRNA(Thr) in a two-step reaction: L-threonine is first activated by ATP to form Thr-AMP and then transferred to the acceptor end of tRNA(Thr). Also edits incorrectly charged L-seryl-tRNA(Thr).</text>
</comment>
<comment type="catalytic activity">
    <reaction evidence="1">
        <text>tRNA(Thr) + L-threonine + ATP = L-threonyl-tRNA(Thr) + AMP + diphosphate + H(+)</text>
        <dbReference type="Rhea" id="RHEA:24624"/>
        <dbReference type="Rhea" id="RHEA-COMP:9670"/>
        <dbReference type="Rhea" id="RHEA-COMP:9704"/>
        <dbReference type="ChEBI" id="CHEBI:15378"/>
        <dbReference type="ChEBI" id="CHEBI:30616"/>
        <dbReference type="ChEBI" id="CHEBI:33019"/>
        <dbReference type="ChEBI" id="CHEBI:57926"/>
        <dbReference type="ChEBI" id="CHEBI:78442"/>
        <dbReference type="ChEBI" id="CHEBI:78534"/>
        <dbReference type="ChEBI" id="CHEBI:456215"/>
        <dbReference type="EC" id="6.1.1.3"/>
    </reaction>
</comment>
<comment type="cofactor">
    <cofactor evidence="1">
        <name>Zn(2+)</name>
        <dbReference type="ChEBI" id="CHEBI:29105"/>
    </cofactor>
    <text evidence="1">Binds 1 zinc ion per subunit.</text>
</comment>
<comment type="subunit">
    <text evidence="1">Homodimer.</text>
</comment>
<comment type="subcellular location">
    <subcellularLocation>
        <location evidence="1">Cytoplasm</location>
    </subcellularLocation>
</comment>
<comment type="similarity">
    <text evidence="1">Belongs to the class-II aminoacyl-tRNA synthetase family.</text>
</comment>
<keyword id="KW-0030">Aminoacyl-tRNA synthetase</keyword>
<keyword id="KW-0067">ATP-binding</keyword>
<keyword id="KW-0963">Cytoplasm</keyword>
<keyword id="KW-0436">Ligase</keyword>
<keyword id="KW-0479">Metal-binding</keyword>
<keyword id="KW-0547">Nucleotide-binding</keyword>
<keyword id="KW-0648">Protein biosynthesis</keyword>
<keyword id="KW-0694">RNA-binding</keyword>
<keyword id="KW-0820">tRNA-binding</keyword>
<keyword id="KW-0862">Zinc</keyword>
<evidence type="ECO:0000255" key="1">
    <source>
        <dbReference type="HAMAP-Rule" id="MF_00184"/>
    </source>
</evidence>
<evidence type="ECO:0000255" key="2">
    <source>
        <dbReference type="PROSITE-ProRule" id="PRU01228"/>
    </source>
</evidence>
<feature type="chain" id="PRO_0000100942" description="Threonine--tRNA ligase">
    <location>
        <begin position="1"/>
        <end position="658"/>
    </location>
</feature>
<feature type="domain" description="TGS" evidence="2">
    <location>
        <begin position="1"/>
        <end position="64"/>
    </location>
</feature>
<feature type="region of interest" description="Catalytic" evidence="1">
    <location>
        <begin position="246"/>
        <end position="549"/>
    </location>
</feature>
<feature type="binding site" evidence="1">
    <location>
        <position position="343"/>
    </location>
    <ligand>
        <name>Zn(2+)</name>
        <dbReference type="ChEBI" id="CHEBI:29105"/>
    </ligand>
</feature>
<feature type="binding site" evidence="1">
    <location>
        <position position="394"/>
    </location>
    <ligand>
        <name>Zn(2+)</name>
        <dbReference type="ChEBI" id="CHEBI:29105"/>
    </ligand>
</feature>
<feature type="binding site" evidence="1">
    <location>
        <position position="526"/>
    </location>
    <ligand>
        <name>Zn(2+)</name>
        <dbReference type="ChEBI" id="CHEBI:29105"/>
    </ligand>
</feature>
<protein>
    <recommendedName>
        <fullName evidence="1">Threonine--tRNA ligase</fullName>
        <ecNumber evidence="1">6.1.1.3</ecNumber>
    </recommendedName>
    <alternativeName>
        <fullName evidence="1">Threonyl-tRNA synthetase</fullName>
        <shortName evidence="1">ThrRS</shortName>
    </alternativeName>
</protein>
<name>SYT_BARQU</name>
<accession>Q6FZZ7</accession>
<organism>
    <name type="scientific">Bartonella quintana (strain Toulouse)</name>
    <name type="common">Rochalimaea quintana</name>
    <dbReference type="NCBI Taxonomy" id="283165"/>
    <lineage>
        <taxon>Bacteria</taxon>
        <taxon>Pseudomonadati</taxon>
        <taxon>Pseudomonadota</taxon>
        <taxon>Alphaproteobacteria</taxon>
        <taxon>Hyphomicrobiales</taxon>
        <taxon>Bartonellaceae</taxon>
        <taxon>Bartonella</taxon>
    </lineage>
</organism>
<gene>
    <name evidence="1" type="primary">thrS</name>
    <name type="ordered locus">BQ05510</name>
</gene>
<proteinExistence type="inferred from homology"/>
<sequence>MSCSVSLSFPDGSKRDYPNEMTGLELAASISKSLAKKAVAYSLNGITRDLSDPLGQSGQIEIITREDPRALELIRHDCAHVLAEAVQELFPETQVTIGPVIENGFYYDFARQQPFTLNDLTIIEKKMHEIIQRNKPFRKEIWSRKKAREIFSEKNELYKVELIDSIPDNQDLKIYYQGDWFDLCRGPHMQSTGQIGNAFKLMKVAGAYWRGDAHNPMLTRIYGTAFANENDLKAYLHMLEEAEKRDHRRLGREMDLFHFQEDGPGMIFWHQKGWKMFQNLISYMRRRLDDHQYSEVNAPQVLDKSLWELSGHWGWYKENMFKAIPAIEDWDDKCIYALKPMNCPGHVQIFKHSLKSYRDLPVRLAEFGVVHRYEPSGALHGLMRVRSFTQDDAHIFCTDEQLADECLNINDLILSTYADFGFKEISLKLSTRPEKRVGSDSLWDHAENIMESVLKTIETKFAGQIKTSILPGEGAFYGPKFEYTLKDAIGREWQCGTTQVDFNLPERFDAFYIDKDSEKRQPVMIHRAIFGSMERFLGILIENFAGHMPLWLAPEQVVVAAITSEANEYAKKITARLKAVGLSAKSDLRNEKINYKIREHSLQKVPVILVCGKREAETNSVSMRRLGSTDQVFLSIEETIEQLKNEAMSPDLRRSING</sequence>
<dbReference type="EC" id="6.1.1.3" evidence="1"/>
<dbReference type="EMBL" id="BX897700">
    <property type="protein sequence ID" value="CAF26046.1"/>
    <property type="molecule type" value="Genomic_DNA"/>
</dbReference>
<dbReference type="RefSeq" id="WP_011179320.1">
    <property type="nucleotide sequence ID" value="NC_005955.1"/>
</dbReference>
<dbReference type="SMR" id="Q6FZZ7"/>
<dbReference type="KEGG" id="bqu:BQ05510"/>
<dbReference type="eggNOG" id="COG0441">
    <property type="taxonomic scope" value="Bacteria"/>
</dbReference>
<dbReference type="HOGENOM" id="CLU_008554_0_1_5"/>
<dbReference type="OrthoDB" id="9802304at2"/>
<dbReference type="Proteomes" id="UP000000597">
    <property type="component" value="Chromosome"/>
</dbReference>
<dbReference type="GO" id="GO:0005829">
    <property type="term" value="C:cytosol"/>
    <property type="evidence" value="ECO:0007669"/>
    <property type="project" value="TreeGrafter"/>
</dbReference>
<dbReference type="GO" id="GO:0005524">
    <property type="term" value="F:ATP binding"/>
    <property type="evidence" value="ECO:0007669"/>
    <property type="project" value="UniProtKB-UniRule"/>
</dbReference>
<dbReference type="GO" id="GO:0046872">
    <property type="term" value="F:metal ion binding"/>
    <property type="evidence" value="ECO:0007669"/>
    <property type="project" value="UniProtKB-KW"/>
</dbReference>
<dbReference type="GO" id="GO:0004829">
    <property type="term" value="F:threonine-tRNA ligase activity"/>
    <property type="evidence" value="ECO:0007669"/>
    <property type="project" value="UniProtKB-UniRule"/>
</dbReference>
<dbReference type="GO" id="GO:0000049">
    <property type="term" value="F:tRNA binding"/>
    <property type="evidence" value="ECO:0007669"/>
    <property type="project" value="UniProtKB-KW"/>
</dbReference>
<dbReference type="GO" id="GO:0006435">
    <property type="term" value="P:threonyl-tRNA aminoacylation"/>
    <property type="evidence" value="ECO:0007669"/>
    <property type="project" value="UniProtKB-UniRule"/>
</dbReference>
<dbReference type="CDD" id="cd01667">
    <property type="entry name" value="TGS_ThrRS"/>
    <property type="match status" value="1"/>
</dbReference>
<dbReference type="CDD" id="cd00860">
    <property type="entry name" value="ThrRS_anticodon"/>
    <property type="match status" value="1"/>
</dbReference>
<dbReference type="CDD" id="cd00771">
    <property type="entry name" value="ThrRS_core"/>
    <property type="match status" value="1"/>
</dbReference>
<dbReference type="FunFam" id="3.30.54.20:FF:000002">
    <property type="entry name" value="Threonine--tRNA ligase"/>
    <property type="match status" value="1"/>
</dbReference>
<dbReference type="FunFam" id="3.30.930.10:FF:000002">
    <property type="entry name" value="Threonine--tRNA ligase"/>
    <property type="match status" value="1"/>
</dbReference>
<dbReference type="FunFam" id="3.40.50.800:FF:000001">
    <property type="entry name" value="Threonine--tRNA ligase"/>
    <property type="match status" value="1"/>
</dbReference>
<dbReference type="FunFam" id="3.30.980.10:FF:000005">
    <property type="entry name" value="Threonyl-tRNA synthetase, mitochondrial"/>
    <property type="match status" value="1"/>
</dbReference>
<dbReference type="Gene3D" id="3.10.20.30">
    <property type="match status" value="1"/>
</dbReference>
<dbReference type="Gene3D" id="3.30.54.20">
    <property type="match status" value="1"/>
</dbReference>
<dbReference type="Gene3D" id="3.40.50.800">
    <property type="entry name" value="Anticodon-binding domain"/>
    <property type="match status" value="1"/>
</dbReference>
<dbReference type="Gene3D" id="3.30.930.10">
    <property type="entry name" value="Bira Bifunctional Protein, Domain 2"/>
    <property type="match status" value="1"/>
</dbReference>
<dbReference type="Gene3D" id="3.30.980.10">
    <property type="entry name" value="Threonyl-trna Synthetase, Chain A, domain 2"/>
    <property type="match status" value="1"/>
</dbReference>
<dbReference type="HAMAP" id="MF_00184">
    <property type="entry name" value="Thr_tRNA_synth"/>
    <property type="match status" value="1"/>
</dbReference>
<dbReference type="InterPro" id="IPR002314">
    <property type="entry name" value="aa-tRNA-synt_IIb"/>
</dbReference>
<dbReference type="InterPro" id="IPR006195">
    <property type="entry name" value="aa-tRNA-synth_II"/>
</dbReference>
<dbReference type="InterPro" id="IPR045864">
    <property type="entry name" value="aa-tRNA-synth_II/BPL/LPL"/>
</dbReference>
<dbReference type="InterPro" id="IPR004154">
    <property type="entry name" value="Anticodon-bd"/>
</dbReference>
<dbReference type="InterPro" id="IPR036621">
    <property type="entry name" value="Anticodon-bd_dom_sf"/>
</dbReference>
<dbReference type="InterPro" id="IPR012675">
    <property type="entry name" value="Beta-grasp_dom_sf"/>
</dbReference>
<dbReference type="InterPro" id="IPR004095">
    <property type="entry name" value="TGS"/>
</dbReference>
<dbReference type="InterPro" id="IPR012676">
    <property type="entry name" value="TGS-like"/>
</dbReference>
<dbReference type="InterPro" id="IPR002320">
    <property type="entry name" value="Thr-tRNA-ligase_IIa"/>
</dbReference>
<dbReference type="InterPro" id="IPR018163">
    <property type="entry name" value="Thr/Ala-tRNA-synth_IIc_edit"/>
</dbReference>
<dbReference type="InterPro" id="IPR047246">
    <property type="entry name" value="ThrRS_anticodon"/>
</dbReference>
<dbReference type="InterPro" id="IPR033728">
    <property type="entry name" value="ThrRS_core"/>
</dbReference>
<dbReference type="InterPro" id="IPR012947">
    <property type="entry name" value="tRNA_SAD"/>
</dbReference>
<dbReference type="NCBIfam" id="TIGR00418">
    <property type="entry name" value="thrS"/>
    <property type="match status" value="1"/>
</dbReference>
<dbReference type="PANTHER" id="PTHR11451:SF44">
    <property type="entry name" value="THREONINE--TRNA LIGASE, CHLOROPLASTIC_MITOCHONDRIAL 2"/>
    <property type="match status" value="1"/>
</dbReference>
<dbReference type="PANTHER" id="PTHR11451">
    <property type="entry name" value="THREONINE-TRNA LIGASE"/>
    <property type="match status" value="1"/>
</dbReference>
<dbReference type="Pfam" id="PF03129">
    <property type="entry name" value="HGTP_anticodon"/>
    <property type="match status" value="1"/>
</dbReference>
<dbReference type="Pfam" id="PF02824">
    <property type="entry name" value="TGS"/>
    <property type="match status" value="1"/>
</dbReference>
<dbReference type="Pfam" id="PF00587">
    <property type="entry name" value="tRNA-synt_2b"/>
    <property type="match status" value="1"/>
</dbReference>
<dbReference type="Pfam" id="PF07973">
    <property type="entry name" value="tRNA_SAD"/>
    <property type="match status" value="1"/>
</dbReference>
<dbReference type="PRINTS" id="PR01047">
    <property type="entry name" value="TRNASYNTHTHR"/>
</dbReference>
<dbReference type="SMART" id="SM00863">
    <property type="entry name" value="tRNA_SAD"/>
    <property type="match status" value="1"/>
</dbReference>
<dbReference type="SUPFAM" id="SSF52954">
    <property type="entry name" value="Class II aaRS ABD-related"/>
    <property type="match status" value="1"/>
</dbReference>
<dbReference type="SUPFAM" id="SSF55681">
    <property type="entry name" value="Class II aaRS and biotin synthetases"/>
    <property type="match status" value="1"/>
</dbReference>
<dbReference type="SUPFAM" id="SSF81271">
    <property type="entry name" value="TGS-like"/>
    <property type="match status" value="1"/>
</dbReference>
<dbReference type="SUPFAM" id="SSF55186">
    <property type="entry name" value="ThrRS/AlaRS common domain"/>
    <property type="match status" value="1"/>
</dbReference>
<dbReference type="PROSITE" id="PS50862">
    <property type="entry name" value="AA_TRNA_LIGASE_II"/>
    <property type="match status" value="1"/>
</dbReference>
<dbReference type="PROSITE" id="PS51880">
    <property type="entry name" value="TGS"/>
    <property type="match status" value="1"/>
</dbReference>